<keyword id="KW-0413">Isomerase</keyword>
<gene>
    <name evidence="1" type="primary">rpiA</name>
    <name type="ordered locus">CPn_0141</name>
    <name type="ordered locus">CP_0631</name>
    <name type="ordered locus">CpB0142</name>
</gene>
<organism>
    <name type="scientific">Chlamydia pneumoniae</name>
    <name type="common">Chlamydophila pneumoniae</name>
    <dbReference type="NCBI Taxonomy" id="83558"/>
    <lineage>
        <taxon>Bacteria</taxon>
        <taxon>Pseudomonadati</taxon>
        <taxon>Chlamydiota</taxon>
        <taxon>Chlamydiia</taxon>
        <taxon>Chlamydiales</taxon>
        <taxon>Chlamydiaceae</taxon>
        <taxon>Chlamydia/Chlamydophila group</taxon>
        <taxon>Chlamydia</taxon>
    </lineage>
</organism>
<sequence length="231" mass="25574">MEKDLHLHEKKCLAHEAATQVTSGMILGLGSGSTAKEFIFALAHRIQTESLAVHAIASSQNSYALAKQLAIPLLNPEKFSSLDLTVDGADEVDPQLRMIKGGGGAIFREKILLRAAKRSIILVDESKLVPVLGKFRVPLEISRFGRSAIIEEIRHLGYEGEWRLQDTGDLFITDSSNYIYDIFSPNSYPNPEKDLLKLIQIHGVIEVGFVIEKVEVWSSNSQGLISKKYSV</sequence>
<accession>Q9Z942</accession>
<accession>Q9JQ38</accession>
<protein>
    <recommendedName>
        <fullName evidence="1">Ribose-5-phosphate isomerase A</fullName>
        <ecNumber evidence="1">5.3.1.6</ecNumber>
    </recommendedName>
    <alternativeName>
        <fullName evidence="1">Phosphoriboisomerase A</fullName>
        <shortName evidence="1">PRI</shortName>
    </alternativeName>
</protein>
<evidence type="ECO:0000255" key="1">
    <source>
        <dbReference type="HAMAP-Rule" id="MF_00170"/>
    </source>
</evidence>
<comment type="function">
    <text evidence="1">Catalyzes the reversible conversion of ribose-5-phosphate to ribulose 5-phosphate.</text>
</comment>
<comment type="catalytic activity">
    <reaction evidence="1">
        <text>aldehydo-D-ribose 5-phosphate = D-ribulose 5-phosphate</text>
        <dbReference type="Rhea" id="RHEA:14657"/>
        <dbReference type="ChEBI" id="CHEBI:58121"/>
        <dbReference type="ChEBI" id="CHEBI:58273"/>
        <dbReference type="EC" id="5.3.1.6"/>
    </reaction>
</comment>
<comment type="pathway">
    <text evidence="1">Carbohydrate degradation; pentose phosphate pathway; D-ribose 5-phosphate from D-ribulose 5-phosphate (non-oxidative stage): step 1/1.</text>
</comment>
<comment type="subunit">
    <text evidence="1">Homodimer.</text>
</comment>
<comment type="similarity">
    <text evidence="1">Belongs to the ribose 5-phosphate isomerase family.</text>
</comment>
<proteinExistence type="inferred from homology"/>
<name>RPIA_CHLPN</name>
<dbReference type="EC" id="5.3.1.6" evidence="1"/>
<dbReference type="EMBL" id="AE001363">
    <property type="protein sequence ID" value="AAD18294.1"/>
    <property type="molecule type" value="Genomic_DNA"/>
</dbReference>
<dbReference type="EMBL" id="AE002161">
    <property type="protein sequence ID" value="AAF38446.1"/>
    <property type="molecule type" value="Genomic_DNA"/>
</dbReference>
<dbReference type="EMBL" id="BA000008">
    <property type="protein sequence ID" value="BAA98351.1"/>
    <property type="molecule type" value="Genomic_DNA"/>
</dbReference>
<dbReference type="EMBL" id="AE009440">
    <property type="protein sequence ID" value="AAP98075.1"/>
    <property type="molecule type" value="Genomic_DNA"/>
</dbReference>
<dbReference type="PIR" id="B72115">
    <property type="entry name" value="B72115"/>
</dbReference>
<dbReference type="PIR" id="E86508">
    <property type="entry name" value="E86508"/>
</dbReference>
<dbReference type="RefSeq" id="NP_224349.1">
    <property type="nucleotide sequence ID" value="NC_000922.1"/>
</dbReference>
<dbReference type="RefSeq" id="WP_010882791.1">
    <property type="nucleotide sequence ID" value="NZ_LN847257.1"/>
</dbReference>
<dbReference type="SMR" id="Q9Z942"/>
<dbReference type="STRING" id="406984.CPK_ORF00653"/>
<dbReference type="GeneID" id="45050186"/>
<dbReference type="KEGG" id="cpa:CP_0631"/>
<dbReference type="KEGG" id="cpj:rpiA"/>
<dbReference type="KEGG" id="cpn:CPn_0141"/>
<dbReference type="KEGG" id="cpt:CpB0142"/>
<dbReference type="PATRIC" id="fig|115713.3.peg.158"/>
<dbReference type="eggNOG" id="COG0120">
    <property type="taxonomic scope" value="Bacteria"/>
</dbReference>
<dbReference type="HOGENOM" id="CLU_056590_1_0_0"/>
<dbReference type="OrthoDB" id="5870696at2"/>
<dbReference type="UniPathway" id="UPA00115">
    <property type="reaction ID" value="UER00412"/>
</dbReference>
<dbReference type="Proteomes" id="UP000000583">
    <property type="component" value="Chromosome"/>
</dbReference>
<dbReference type="Proteomes" id="UP000000801">
    <property type="component" value="Chromosome"/>
</dbReference>
<dbReference type="GO" id="GO:0004751">
    <property type="term" value="F:ribose-5-phosphate isomerase activity"/>
    <property type="evidence" value="ECO:0007669"/>
    <property type="project" value="UniProtKB-UniRule"/>
</dbReference>
<dbReference type="GO" id="GO:0009052">
    <property type="term" value="P:pentose-phosphate shunt, non-oxidative branch"/>
    <property type="evidence" value="ECO:0007669"/>
    <property type="project" value="UniProtKB-UniRule"/>
</dbReference>
<dbReference type="CDD" id="cd01398">
    <property type="entry name" value="RPI_A"/>
    <property type="match status" value="1"/>
</dbReference>
<dbReference type="FunFam" id="3.40.50.1360:FF:000001">
    <property type="entry name" value="Ribose-5-phosphate isomerase A"/>
    <property type="match status" value="1"/>
</dbReference>
<dbReference type="Gene3D" id="3.30.70.260">
    <property type="match status" value="1"/>
</dbReference>
<dbReference type="Gene3D" id="3.40.50.1360">
    <property type="match status" value="1"/>
</dbReference>
<dbReference type="HAMAP" id="MF_00170">
    <property type="entry name" value="Rib_5P_isom_A"/>
    <property type="match status" value="1"/>
</dbReference>
<dbReference type="InterPro" id="IPR037171">
    <property type="entry name" value="NagB/RpiA_transferase-like"/>
</dbReference>
<dbReference type="InterPro" id="IPR050262">
    <property type="entry name" value="Ribose-5P_isomerase"/>
</dbReference>
<dbReference type="InterPro" id="IPR020672">
    <property type="entry name" value="Ribose5P_isomerase_typA_subgr"/>
</dbReference>
<dbReference type="InterPro" id="IPR004788">
    <property type="entry name" value="Ribose5P_isomerase_type_A"/>
</dbReference>
<dbReference type="NCBIfam" id="NF001924">
    <property type="entry name" value="PRK00702.1"/>
    <property type="match status" value="1"/>
</dbReference>
<dbReference type="NCBIfam" id="TIGR00021">
    <property type="entry name" value="rpiA"/>
    <property type="match status" value="1"/>
</dbReference>
<dbReference type="PANTHER" id="PTHR43748">
    <property type="entry name" value="RIBOSE-5-PHOSPHATE ISOMERASE 3, CHLOROPLASTIC-RELATED"/>
    <property type="match status" value="1"/>
</dbReference>
<dbReference type="PANTHER" id="PTHR43748:SF3">
    <property type="entry name" value="RIBOSE-5-PHOSPHATE ISOMERASE 3, CHLOROPLASTIC-RELATED"/>
    <property type="match status" value="1"/>
</dbReference>
<dbReference type="Pfam" id="PF06026">
    <property type="entry name" value="Rib_5-P_isom_A"/>
    <property type="match status" value="1"/>
</dbReference>
<dbReference type="SUPFAM" id="SSF75445">
    <property type="entry name" value="D-ribose-5-phosphate isomerase (RpiA), lid domain"/>
    <property type="match status" value="1"/>
</dbReference>
<dbReference type="SUPFAM" id="SSF100950">
    <property type="entry name" value="NagB/RpiA/CoA transferase-like"/>
    <property type="match status" value="1"/>
</dbReference>
<feature type="chain" id="PRO_0000158407" description="Ribose-5-phosphate isomerase A">
    <location>
        <begin position="1"/>
        <end position="231"/>
    </location>
</feature>
<feature type="active site" description="Proton acceptor" evidence="1">
    <location>
        <position position="109"/>
    </location>
</feature>
<feature type="binding site" evidence="1">
    <location>
        <begin position="31"/>
        <end position="34"/>
    </location>
    <ligand>
        <name>substrate</name>
    </ligand>
</feature>
<feature type="binding site" evidence="1">
    <location>
        <begin position="87"/>
        <end position="90"/>
    </location>
    <ligand>
        <name>substrate</name>
    </ligand>
</feature>
<feature type="binding site" evidence="1">
    <location>
        <begin position="100"/>
        <end position="103"/>
    </location>
    <ligand>
        <name>substrate</name>
    </ligand>
</feature>
<feature type="binding site" evidence="1">
    <location>
        <position position="127"/>
    </location>
    <ligand>
        <name>substrate</name>
    </ligand>
</feature>
<reference key="1">
    <citation type="journal article" date="1999" name="Nat. Genet.">
        <title>Comparative genomes of Chlamydia pneumoniae and C. trachomatis.</title>
        <authorList>
            <person name="Kalman S."/>
            <person name="Mitchell W.P."/>
            <person name="Marathe R."/>
            <person name="Lammel C.J."/>
            <person name="Fan J."/>
            <person name="Hyman R.W."/>
            <person name="Olinger L."/>
            <person name="Grimwood J."/>
            <person name="Davis R.W."/>
            <person name="Stephens R.S."/>
        </authorList>
    </citation>
    <scope>NUCLEOTIDE SEQUENCE [LARGE SCALE GENOMIC DNA]</scope>
    <source>
        <strain>CWL029</strain>
    </source>
</reference>
<reference key="2">
    <citation type="journal article" date="2000" name="Nucleic Acids Res.">
        <title>Genome sequences of Chlamydia trachomatis MoPn and Chlamydia pneumoniae AR39.</title>
        <authorList>
            <person name="Read T.D."/>
            <person name="Brunham R.C."/>
            <person name="Shen C."/>
            <person name="Gill S.R."/>
            <person name="Heidelberg J.F."/>
            <person name="White O."/>
            <person name="Hickey E.K."/>
            <person name="Peterson J.D."/>
            <person name="Utterback T.R."/>
            <person name="Berry K.J."/>
            <person name="Bass S."/>
            <person name="Linher K.D."/>
            <person name="Weidman J.F."/>
            <person name="Khouri H.M."/>
            <person name="Craven B."/>
            <person name="Bowman C."/>
            <person name="Dodson R.J."/>
            <person name="Gwinn M.L."/>
            <person name="Nelson W.C."/>
            <person name="DeBoy R.T."/>
            <person name="Kolonay J.F."/>
            <person name="McClarty G."/>
            <person name="Salzberg S.L."/>
            <person name="Eisen J.A."/>
            <person name="Fraser C.M."/>
        </authorList>
    </citation>
    <scope>NUCLEOTIDE SEQUENCE [LARGE SCALE GENOMIC DNA]</scope>
    <source>
        <strain>AR39</strain>
    </source>
</reference>
<reference key="3">
    <citation type="journal article" date="2000" name="Nucleic Acids Res.">
        <title>Comparison of whole genome sequences of Chlamydia pneumoniae J138 from Japan and CWL029 from USA.</title>
        <authorList>
            <person name="Shirai M."/>
            <person name="Hirakawa H."/>
            <person name="Kimoto M."/>
            <person name="Tabuchi M."/>
            <person name="Kishi F."/>
            <person name="Ouchi K."/>
            <person name="Shiba T."/>
            <person name="Ishii K."/>
            <person name="Hattori M."/>
            <person name="Kuhara S."/>
            <person name="Nakazawa T."/>
        </authorList>
    </citation>
    <scope>NUCLEOTIDE SEQUENCE [LARGE SCALE GENOMIC DNA]</scope>
    <source>
        <strain>J138</strain>
    </source>
</reference>
<reference key="4">
    <citation type="submission" date="2002-05" db="EMBL/GenBank/DDBJ databases">
        <title>The genome sequence of Chlamydia pneumoniae TW183 and comparison with other Chlamydia strains based on whole genome sequence analysis.</title>
        <authorList>
            <person name="Geng M.M."/>
            <person name="Schuhmacher A."/>
            <person name="Muehldorfer I."/>
            <person name="Bensch K.W."/>
            <person name="Schaefer K.P."/>
            <person name="Schneider S."/>
            <person name="Pohl T."/>
            <person name="Essig A."/>
            <person name="Marre R."/>
            <person name="Melchers K."/>
        </authorList>
    </citation>
    <scope>NUCLEOTIDE SEQUENCE [LARGE SCALE GENOMIC DNA]</scope>
    <source>
        <strain>TW-183</strain>
    </source>
</reference>